<proteinExistence type="inferred from homology"/>
<sequence>MADRGQRRGCAPGIASALRASFQGKSRPWTQTRYWAFALLTPLVVAMVLTGCSASGTQLELAPTADRRAAVGTTSDINQQDPATLQDGGNLRLSLTDFPPNFNILHIDGNNAEVAAMMKATLPRAFIIGPDGSTTVDTNYFTSIELTRTAPQVVTYTINPEAVWSDGTPITWRDIASQIHAISGADKAFEIASSSGAERVASVTRGVDDRQAVVTFAKPYAEWRGMFAGNGMLLPASMTATPEAFNKGQLDGPGPSAGPFVVSALDRTAQRIVLTRNPRWWGARPRLDSITYLVLDDAARLPALQNNTIDATGVGTLDQLTIAARTKGISIRRAPGPSWYHFTLNGAPGSILADKALRLAIAKGIDRYTIARVAQYGLTSDPVPLNNHVFVAGQDGYQDNSGVVAYNPEQAKRELDALGWRRSGAFREKDGRQLVIRDLFYDAQSTRQFAQIAQHTLAQIGVKLELQAKSGSGFFSDYVNVGAFDIAQFGWVGDAFPLSSLTQIYASDGESNFGKIGSPQIDAAIERTLAELDPGKARALANQVDELIWAEGFSLPLTQSPGTVAVRSTLANFGATGLADLDYTAIGFMRR</sequence>
<evidence type="ECO:0000250" key="1">
    <source>
        <dbReference type="UniProtKB" id="P9WGU5"/>
    </source>
</evidence>
<evidence type="ECO:0000305" key="2"/>
<accession>P66772</accession>
<accession>A0A1R3XXX0</accession>
<accession>Q11041</accession>
<accession>X2BHM1</accession>
<organism>
    <name type="scientific">Mycobacterium bovis (strain ATCC BAA-935 / AF2122/97)</name>
    <dbReference type="NCBI Taxonomy" id="233413"/>
    <lineage>
        <taxon>Bacteria</taxon>
        <taxon>Bacillati</taxon>
        <taxon>Actinomycetota</taxon>
        <taxon>Actinomycetes</taxon>
        <taxon>Mycobacteriales</taxon>
        <taxon>Mycobacteriaceae</taxon>
        <taxon>Mycobacterium</taxon>
        <taxon>Mycobacterium tuberculosis complex</taxon>
    </lineage>
</organism>
<reference key="1">
    <citation type="journal article" date="2003" name="Proc. Natl. Acad. Sci. U.S.A.">
        <title>The complete genome sequence of Mycobacterium bovis.</title>
        <authorList>
            <person name="Garnier T."/>
            <person name="Eiglmeier K."/>
            <person name="Camus J.-C."/>
            <person name="Medina N."/>
            <person name="Mansoor H."/>
            <person name="Pryor M."/>
            <person name="Duthoy S."/>
            <person name="Grondin S."/>
            <person name="Lacroix C."/>
            <person name="Monsempe C."/>
            <person name="Simon S."/>
            <person name="Harris B."/>
            <person name="Atkin R."/>
            <person name="Doggett J."/>
            <person name="Mayes R."/>
            <person name="Keating L."/>
            <person name="Wheeler P.R."/>
            <person name="Parkhill J."/>
            <person name="Barrell B.G."/>
            <person name="Cole S.T."/>
            <person name="Gordon S.V."/>
            <person name="Hewinson R.G."/>
        </authorList>
    </citation>
    <scope>NUCLEOTIDE SEQUENCE [LARGE SCALE GENOMIC DNA]</scope>
    <source>
        <strain>ATCC BAA-935 / AF2122/97</strain>
    </source>
</reference>
<reference key="2">
    <citation type="journal article" date="2017" name="Genome Announc.">
        <title>Updated reference genome sequence and annotation of Mycobacterium bovis AF2122/97.</title>
        <authorList>
            <person name="Malone K.M."/>
            <person name="Farrell D."/>
            <person name="Stuber T.P."/>
            <person name="Schubert O.T."/>
            <person name="Aebersold R."/>
            <person name="Robbe-Austerman S."/>
            <person name="Gordon S.V."/>
        </authorList>
    </citation>
    <scope>NUCLEOTIDE SEQUENCE [LARGE SCALE GENOMIC DNA]</scope>
    <scope>GENOME REANNOTATION</scope>
    <source>
        <strain>ATCC BAA-935 / AF2122/97</strain>
    </source>
</reference>
<dbReference type="EMBL" id="LT708304">
    <property type="protein sequence ID" value="SIT99914.1"/>
    <property type="molecule type" value="Genomic_DNA"/>
</dbReference>
<dbReference type="RefSeq" id="NP_854965.1">
    <property type="nucleotide sequence ID" value="NC_002945.3"/>
</dbReference>
<dbReference type="RefSeq" id="WP_003900310.1">
    <property type="nucleotide sequence ID" value="NC_002945.4"/>
</dbReference>
<dbReference type="SMR" id="P66772"/>
<dbReference type="GeneID" id="45425252"/>
<dbReference type="KEGG" id="mbo:BQ2027_MB1311C"/>
<dbReference type="PATRIC" id="fig|233413.5.peg.1436"/>
<dbReference type="Proteomes" id="UP000001419">
    <property type="component" value="Chromosome"/>
</dbReference>
<dbReference type="GO" id="GO:0043190">
    <property type="term" value="C:ATP-binding cassette (ABC) transporter complex"/>
    <property type="evidence" value="ECO:0007669"/>
    <property type="project" value="InterPro"/>
</dbReference>
<dbReference type="GO" id="GO:0042597">
    <property type="term" value="C:periplasmic space"/>
    <property type="evidence" value="ECO:0007669"/>
    <property type="project" value="UniProtKB-SubCell"/>
</dbReference>
<dbReference type="GO" id="GO:1904680">
    <property type="term" value="F:peptide transmembrane transporter activity"/>
    <property type="evidence" value="ECO:0007669"/>
    <property type="project" value="TreeGrafter"/>
</dbReference>
<dbReference type="GO" id="GO:0015833">
    <property type="term" value="P:peptide transport"/>
    <property type="evidence" value="ECO:0007669"/>
    <property type="project" value="TreeGrafter"/>
</dbReference>
<dbReference type="CDD" id="cd08501">
    <property type="entry name" value="PBP2_Lpqw"/>
    <property type="match status" value="1"/>
</dbReference>
<dbReference type="FunFam" id="3.10.105.10:FF:000032">
    <property type="entry name" value="Probable periplasmic oligopeptide-binding lipoprotein oppA"/>
    <property type="match status" value="1"/>
</dbReference>
<dbReference type="Gene3D" id="3.90.76.10">
    <property type="entry name" value="Dipeptide-binding Protein, Domain 1"/>
    <property type="match status" value="1"/>
</dbReference>
<dbReference type="Gene3D" id="3.10.105.10">
    <property type="entry name" value="Dipeptide-binding Protein, Domain 3"/>
    <property type="match status" value="1"/>
</dbReference>
<dbReference type="Gene3D" id="3.40.190.10">
    <property type="entry name" value="Periplasmic binding protein-like II"/>
    <property type="match status" value="1"/>
</dbReference>
<dbReference type="InterPro" id="IPR030678">
    <property type="entry name" value="Peptide/Ni-bd"/>
</dbReference>
<dbReference type="InterPro" id="IPR039424">
    <property type="entry name" value="SBP_5"/>
</dbReference>
<dbReference type="InterPro" id="IPR000914">
    <property type="entry name" value="SBP_5_dom"/>
</dbReference>
<dbReference type="PANTHER" id="PTHR30290:SF65">
    <property type="entry name" value="MONOACYL PHOSPHATIDYLINOSITOL TETRAMANNOSIDE-BINDING PROTEIN LPQW-RELATED"/>
    <property type="match status" value="1"/>
</dbReference>
<dbReference type="PANTHER" id="PTHR30290">
    <property type="entry name" value="PERIPLASMIC BINDING COMPONENT OF ABC TRANSPORTER"/>
    <property type="match status" value="1"/>
</dbReference>
<dbReference type="Pfam" id="PF00496">
    <property type="entry name" value="SBP_bac_5"/>
    <property type="match status" value="1"/>
</dbReference>
<dbReference type="PIRSF" id="PIRSF002741">
    <property type="entry name" value="MppA"/>
    <property type="match status" value="1"/>
</dbReference>
<dbReference type="SUPFAM" id="SSF53850">
    <property type="entry name" value="Periplasmic binding protein-like II"/>
    <property type="match status" value="1"/>
</dbReference>
<keyword id="KW-0571">Peptide transport</keyword>
<keyword id="KW-0574">Periplasm</keyword>
<keyword id="KW-0653">Protein transport</keyword>
<keyword id="KW-1185">Reference proteome</keyword>
<keyword id="KW-0813">Transport</keyword>
<gene>
    <name evidence="1" type="primary">oppA</name>
    <name type="ordered locus">BQ2027_MB1311C</name>
</gene>
<protein>
    <recommendedName>
        <fullName evidence="1">Oligopeptide-binding protein OppA</fullName>
    </recommendedName>
</protein>
<comment type="function">
    <text evidence="1">Part of the ABC transporter complex OppABCD involved in the uptake of oligopeptides (By similarity). Peptide-binding protein that shows broad specificity but a moderate preference for hydrophobic oligopeptides and those that are 6-16 amino acids long (By similarity).</text>
</comment>
<comment type="subunit">
    <text evidence="1">The complex is composed of an ATP-binding protein (OppD), two transmembrane proteins (OppB and OppC) and a solute-binding protein (OppA).</text>
</comment>
<comment type="subcellular location">
    <subcellularLocation>
        <location evidence="1">Periplasm</location>
    </subcellularLocation>
    <text evidence="1">Attached to the external side of the transmembrane subunits OppB and OppC.</text>
</comment>
<comment type="similarity">
    <text evidence="2">Belongs to the bacterial solute-binding protein 5 family.</text>
</comment>
<name>OPPA_MYCBO</name>
<feature type="chain" id="PRO_0000062777" description="Oligopeptide-binding protein OppA">
    <location>
        <begin position="1"/>
        <end position="591"/>
    </location>
</feature>